<feature type="chain" id="PRO_0000142754" description="Matrix protein">
    <location>
        <begin position="1"/>
        <end position="335"/>
    </location>
</feature>
<organism>
    <name type="scientific">Measles virus (strain IP-3-Ca)</name>
    <name type="common">MeV</name>
    <name type="synonym">Subacute sclerose panencephalitis virus</name>
    <dbReference type="NCBI Taxonomy" id="11237"/>
    <lineage>
        <taxon>Viruses</taxon>
        <taxon>Riboviria</taxon>
        <taxon>Orthornavirae</taxon>
        <taxon>Negarnaviricota</taxon>
        <taxon>Haploviricotina</taxon>
        <taxon>Monjiviricetes</taxon>
        <taxon>Mononegavirales</taxon>
        <taxon>Paramyxoviridae</taxon>
        <taxon>Orthoparamyxovirinae</taxon>
        <taxon>Morbillivirus</taxon>
        <taxon>Morbillivirus hominis</taxon>
        <taxon>Measles morbillivirus</taxon>
    </lineage>
</organism>
<keyword id="KW-1032">Host cell membrane</keyword>
<keyword id="KW-1043">Host membrane</keyword>
<keyword id="KW-0945">Host-virus interaction</keyword>
<keyword id="KW-0446">Lipid-binding</keyword>
<keyword id="KW-0472">Membrane</keyword>
<keyword id="KW-0261">Viral envelope protein</keyword>
<keyword id="KW-0468">Viral matrix protein</keyword>
<keyword id="KW-0946">Virion</keyword>
<comment type="function">
    <text evidence="1">The M protein has a crucial role in virus assembly and interacts with the RNP complex as well as with the viral membrane. Associates with phosphatidylserine (PS) and phosphatidylinositol 4,5-bisphosphate (PIP2) at the plasma membrane. Interaction with PIP2 triggers matrix protein lattice polymerization. Matrix proteins induce host membrane deformation and curvature necessary for virion assembly/budding.</text>
</comment>
<comment type="subunit">
    <text evidence="1">Homodimer. Dimerization is critical for virion formation. Interacts with host ANP32B.</text>
</comment>
<comment type="subcellular location">
    <subcellularLocation>
        <location evidence="1">Virion</location>
    </subcellularLocation>
    <subcellularLocation>
        <location evidence="1">Host cell membrane</location>
    </subcellularLocation>
</comment>
<comment type="similarity">
    <text evidence="2">Belongs to the morbillivirus/respirovirus/rubulavirus M protein family.</text>
</comment>
<organismHost>
    <name type="scientific">Homo sapiens</name>
    <name type="common">Human</name>
    <dbReference type="NCBI Taxonomy" id="9606"/>
</organismHost>
<name>MATRX_MEASI</name>
<accession>P26034</accession>
<sequence>MTEIHDFDKSEWDIKGSIAPIQPTTYSDGRLVPQVRVTDPGLGDRKDECFMYMFLLGVVEDSDPLGPPIGRAFGSLPLGVGRSTAKPEELLKEATELDIVVRRIAGLNEKLVFYNNPPLTLLTPWRKVLTTGSVFNANQVCNAVNLIPLDTPQRFRVVYMSITRLSDNGYYTVPRRMLEFKSVNAVAFKLLVTLRIHKAIGPGKIIDNAEQLPEATFMVHIGNFRRKKSEVYSADYCKMKIEKMGLVFALGGIGGTSLHIRSTGKMNKTLHAQLGFKKTLCYPLMDINEDPNRLLWRSRCKTIRIQAVLQPSVPQEFRIYDDVIINDDQGLFKVL</sequence>
<reference key="1">
    <citation type="journal article" date="1992" name="Virology">
        <title>Subacute sclerosing panencephalitis is typically characterized by alterations in the fusion protein cytoplasmic domain of the persisting measles virus.</title>
        <authorList>
            <person name="Schmid A."/>
            <person name="Spielhofer P."/>
            <person name="Cattaneo R."/>
            <person name="Baczko K."/>
            <person name="Ter Meulen V."/>
            <person name="Billeter M.A."/>
        </authorList>
    </citation>
    <scope>NUCLEOTIDE SEQUENCE [GENOMIC RNA]</scope>
</reference>
<proteinExistence type="inferred from homology"/>
<protein>
    <recommendedName>
        <fullName>Matrix protein</fullName>
    </recommendedName>
</protein>
<gene>
    <name type="primary">M</name>
</gene>
<dbReference type="EMBL" id="X16566">
    <property type="protein sequence ID" value="CAA34566.1"/>
    <property type="molecule type" value="Genomic_RNA"/>
</dbReference>
<dbReference type="SMR" id="P26034"/>
<dbReference type="GO" id="GO:0020002">
    <property type="term" value="C:host cell plasma membrane"/>
    <property type="evidence" value="ECO:0007669"/>
    <property type="project" value="UniProtKB-SubCell"/>
</dbReference>
<dbReference type="GO" id="GO:0016020">
    <property type="term" value="C:membrane"/>
    <property type="evidence" value="ECO:0007669"/>
    <property type="project" value="UniProtKB-KW"/>
</dbReference>
<dbReference type="GO" id="GO:0019031">
    <property type="term" value="C:viral envelope"/>
    <property type="evidence" value="ECO:0007669"/>
    <property type="project" value="UniProtKB-KW"/>
</dbReference>
<dbReference type="GO" id="GO:0008289">
    <property type="term" value="F:lipid binding"/>
    <property type="evidence" value="ECO:0007669"/>
    <property type="project" value="UniProtKB-KW"/>
</dbReference>
<dbReference type="GO" id="GO:0039660">
    <property type="term" value="F:structural constituent of virion"/>
    <property type="evidence" value="ECO:0007669"/>
    <property type="project" value="UniProtKB-KW"/>
</dbReference>
<dbReference type="GO" id="GO:0019068">
    <property type="term" value="P:virion assembly"/>
    <property type="evidence" value="ECO:0007669"/>
    <property type="project" value="InterPro"/>
</dbReference>
<dbReference type="FunFam" id="2.70.20.50:FF:000001">
    <property type="entry name" value="Matrix protein"/>
    <property type="match status" value="1"/>
</dbReference>
<dbReference type="FunFam" id="2.70.20.60:FF:000001">
    <property type="entry name" value="Matrix protein"/>
    <property type="match status" value="1"/>
</dbReference>
<dbReference type="Gene3D" id="2.70.20.60">
    <property type="entry name" value="Viral matrix protein, C-terminal domain"/>
    <property type="match status" value="1"/>
</dbReference>
<dbReference type="Gene3D" id="2.70.20.50">
    <property type="entry name" value="Viral matrix protein, N-terminal domain"/>
    <property type="match status" value="1"/>
</dbReference>
<dbReference type="InterPro" id="IPR042539">
    <property type="entry name" value="Matrix_C"/>
</dbReference>
<dbReference type="InterPro" id="IPR042540">
    <property type="entry name" value="Matrix_N"/>
</dbReference>
<dbReference type="InterPro" id="IPR055413">
    <property type="entry name" value="Matrix_Paramyxo_C"/>
</dbReference>
<dbReference type="InterPro" id="IPR000982">
    <property type="entry name" value="Matrix_Paramyxo_N"/>
</dbReference>
<dbReference type="Pfam" id="PF23765">
    <property type="entry name" value="Matrix_Paramyxo_C"/>
    <property type="match status" value="1"/>
</dbReference>
<dbReference type="Pfam" id="PF00661">
    <property type="entry name" value="Matrix_Paramyxo_N"/>
    <property type="match status" value="1"/>
</dbReference>
<evidence type="ECO:0000250" key="1">
    <source>
        <dbReference type="UniProtKB" id="Q9W850"/>
    </source>
</evidence>
<evidence type="ECO:0000305" key="2"/>